<evidence type="ECO:0000255" key="1">
    <source>
        <dbReference type="HAMAP-Rule" id="MF_00534"/>
    </source>
</evidence>
<comment type="catalytic activity">
    <reaction evidence="1">
        <text>tRNA(Asn) + L-asparagine + ATP = L-asparaginyl-tRNA(Asn) + AMP + diphosphate + H(+)</text>
        <dbReference type="Rhea" id="RHEA:11180"/>
        <dbReference type="Rhea" id="RHEA-COMP:9659"/>
        <dbReference type="Rhea" id="RHEA-COMP:9674"/>
        <dbReference type="ChEBI" id="CHEBI:15378"/>
        <dbReference type="ChEBI" id="CHEBI:30616"/>
        <dbReference type="ChEBI" id="CHEBI:33019"/>
        <dbReference type="ChEBI" id="CHEBI:58048"/>
        <dbReference type="ChEBI" id="CHEBI:78442"/>
        <dbReference type="ChEBI" id="CHEBI:78515"/>
        <dbReference type="ChEBI" id="CHEBI:456215"/>
        <dbReference type="EC" id="6.1.1.22"/>
    </reaction>
</comment>
<comment type="subunit">
    <text evidence="1">Homodimer.</text>
</comment>
<comment type="subcellular location">
    <subcellularLocation>
        <location evidence="1">Cytoplasm</location>
    </subcellularLocation>
</comment>
<comment type="similarity">
    <text evidence="1">Belongs to the class-II aminoacyl-tRNA synthetase family.</text>
</comment>
<gene>
    <name evidence="1" type="primary">asnS</name>
    <name type="ordered locus">SYNPCC7002_A2468</name>
</gene>
<name>SYN_PICP2</name>
<organism>
    <name type="scientific">Picosynechococcus sp. (strain ATCC 27264 / PCC 7002 / PR-6)</name>
    <name type="common">Agmenellum quadruplicatum</name>
    <dbReference type="NCBI Taxonomy" id="32049"/>
    <lineage>
        <taxon>Bacteria</taxon>
        <taxon>Bacillati</taxon>
        <taxon>Cyanobacteriota</taxon>
        <taxon>Cyanophyceae</taxon>
        <taxon>Oscillatoriophycideae</taxon>
        <taxon>Chroococcales</taxon>
        <taxon>Geminocystaceae</taxon>
        <taxon>Picosynechococcus</taxon>
    </lineage>
</organism>
<feature type="chain" id="PRO_1000128217" description="Asparagine--tRNA ligase">
    <location>
        <begin position="1"/>
        <end position="460"/>
    </location>
</feature>
<protein>
    <recommendedName>
        <fullName evidence="1">Asparagine--tRNA ligase</fullName>
        <ecNumber evidence="1">6.1.1.22</ecNumber>
    </recommendedName>
    <alternativeName>
        <fullName evidence="1">Asparaginyl-tRNA synthetase</fullName>
        <shortName evidence="1">AsnRS</shortName>
    </alternativeName>
</protein>
<proteinExistence type="inferred from homology"/>
<accession>B1XKH1</accession>
<reference key="1">
    <citation type="submission" date="2008-02" db="EMBL/GenBank/DDBJ databases">
        <title>Complete sequence of Synechococcus sp. PCC 7002.</title>
        <authorList>
            <person name="Li T."/>
            <person name="Zhao J."/>
            <person name="Zhao C."/>
            <person name="Liu Z."/>
            <person name="Zhao F."/>
            <person name="Marquardt J."/>
            <person name="Nomura C.T."/>
            <person name="Persson S."/>
            <person name="Detter J.C."/>
            <person name="Richardson P.M."/>
            <person name="Lanz C."/>
            <person name="Schuster S.C."/>
            <person name="Wang J."/>
            <person name="Li S."/>
            <person name="Huang X."/>
            <person name="Cai T."/>
            <person name="Yu Z."/>
            <person name="Luo J."/>
            <person name="Zhao J."/>
            <person name="Bryant D.A."/>
        </authorList>
    </citation>
    <scope>NUCLEOTIDE SEQUENCE [LARGE SCALE GENOMIC DNA]</scope>
    <source>
        <strain>ATCC 27264 / PCC 7002 / PR-6</strain>
    </source>
</reference>
<keyword id="KW-0030">Aminoacyl-tRNA synthetase</keyword>
<keyword id="KW-0067">ATP-binding</keyword>
<keyword id="KW-0963">Cytoplasm</keyword>
<keyword id="KW-0436">Ligase</keyword>
<keyword id="KW-0547">Nucleotide-binding</keyword>
<keyword id="KW-0648">Protein biosynthesis</keyword>
<keyword id="KW-1185">Reference proteome</keyword>
<dbReference type="EC" id="6.1.1.22" evidence="1"/>
<dbReference type="EMBL" id="CP000951">
    <property type="protein sequence ID" value="ACB00446.1"/>
    <property type="molecule type" value="Genomic_DNA"/>
</dbReference>
<dbReference type="RefSeq" id="WP_012308064.1">
    <property type="nucleotide sequence ID" value="NZ_JAHHPU010000003.1"/>
</dbReference>
<dbReference type="SMR" id="B1XKH1"/>
<dbReference type="STRING" id="32049.SYNPCC7002_A2468"/>
<dbReference type="KEGG" id="syp:SYNPCC7002_A2468"/>
<dbReference type="eggNOG" id="COG0017">
    <property type="taxonomic scope" value="Bacteria"/>
</dbReference>
<dbReference type="HOGENOM" id="CLU_004553_2_0_3"/>
<dbReference type="Proteomes" id="UP000001688">
    <property type="component" value="Chromosome"/>
</dbReference>
<dbReference type="GO" id="GO:0005737">
    <property type="term" value="C:cytoplasm"/>
    <property type="evidence" value="ECO:0007669"/>
    <property type="project" value="UniProtKB-SubCell"/>
</dbReference>
<dbReference type="GO" id="GO:0004816">
    <property type="term" value="F:asparagine-tRNA ligase activity"/>
    <property type="evidence" value="ECO:0007669"/>
    <property type="project" value="UniProtKB-UniRule"/>
</dbReference>
<dbReference type="GO" id="GO:0005524">
    <property type="term" value="F:ATP binding"/>
    <property type="evidence" value="ECO:0007669"/>
    <property type="project" value="UniProtKB-UniRule"/>
</dbReference>
<dbReference type="GO" id="GO:0003676">
    <property type="term" value="F:nucleic acid binding"/>
    <property type="evidence" value="ECO:0007669"/>
    <property type="project" value="InterPro"/>
</dbReference>
<dbReference type="GO" id="GO:0006421">
    <property type="term" value="P:asparaginyl-tRNA aminoacylation"/>
    <property type="evidence" value="ECO:0007669"/>
    <property type="project" value="UniProtKB-UniRule"/>
</dbReference>
<dbReference type="CDD" id="cd00776">
    <property type="entry name" value="AsxRS_core"/>
    <property type="match status" value="1"/>
</dbReference>
<dbReference type="CDD" id="cd04318">
    <property type="entry name" value="EcAsnRS_like_N"/>
    <property type="match status" value="1"/>
</dbReference>
<dbReference type="FunFam" id="3.30.930.10:FF:000016">
    <property type="entry name" value="Asparagine--tRNA ligase"/>
    <property type="match status" value="1"/>
</dbReference>
<dbReference type="Gene3D" id="3.30.930.10">
    <property type="entry name" value="Bira Bifunctional Protein, Domain 2"/>
    <property type="match status" value="1"/>
</dbReference>
<dbReference type="Gene3D" id="2.40.50.140">
    <property type="entry name" value="Nucleic acid-binding proteins"/>
    <property type="match status" value="1"/>
</dbReference>
<dbReference type="HAMAP" id="MF_00534">
    <property type="entry name" value="Asn_tRNA_synth"/>
    <property type="match status" value="1"/>
</dbReference>
<dbReference type="InterPro" id="IPR004364">
    <property type="entry name" value="Aa-tRNA-synt_II"/>
</dbReference>
<dbReference type="InterPro" id="IPR006195">
    <property type="entry name" value="aa-tRNA-synth_II"/>
</dbReference>
<dbReference type="InterPro" id="IPR045864">
    <property type="entry name" value="aa-tRNA-synth_II/BPL/LPL"/>
</dbReference>
<dbReference type="InterPro" id="IPR004522">
    <property type="entry name" value="Asn-tRNA-ligase"/>
</dbReference>
<dbReference type="InterPro" id="IPR002312">
    <property type="entry name" value="Asp/Asn-tRNA-synth_IIb"/>
</dbReference>
<dbReference type="InterPro" id="IPR012340">
    <property type="entry name" value="NA-bd_OB-fold"/>
</dbReference>
<dbReference type="InterPro" id="IPR004365">
    <property type="entry name" value="NA-bd_OB_tRNA"/>
</dbReference>
<dbReference type="NCBIfam" id="TIGR00457">
    <property type="entry name" value="asnS"/>
    <property type="match status" value="1"/>
</dbReference>
<dbReference type="NCBIfam" id="NF003037">
    <property type="entry name" value="PRK03932.1"/>
    <property type="match status" value="1"/>
</dbReference>
<dbReference type="PANTHER" id="PTHR22594:SF34">
    <property type="entry name" value="ASPARAGINE--TRNA LIGASE, MITOCHONDRIAL-RELATED"/>
    <property type="match status" value="1"/>
</dbReference>
<dbReference type="PANTHER" id="PTHR22594">
    <property type="entry name" value="ASPARTYL/LYSYL-TRNA SYNTHETASE"/>
    <property type="match status" value="1"/>
</dbReference>
<dbReference type="Pfam" id="PF00152">
    <property type="entry name" value="tRNA-synt_2"/>
    <property type="match status" value="1"/>
</dbReference>
<dbReference type="Pfam" id="PF01336">
    <property type="entry name" value="tRNA_anti-codon"/>
    <property type="match status" value="1"/>
</dbReference>
<dbReference type="PRINTS" id="PR01042">
    <property type="entry name" value="TRNASYNTHASP"/>
</dbReference>
<dbReference type="SUPFAM" id="SSF55681">
    <property type="entry name" value="Class II aaRS and biotin synthetases"/>
    <property type="match status" value="1"/>
</dbReference>
<dbReference type="SUPFAM" id="SSF50249">
    <property type="entry name" value="Nucleic acid-binding proteins"/>
    <property type="match status" value="1"/>
</dbReference>
<dbReference type="PROSITE" id="PS50862">
    <property type="entry name" value="AA_TRNA_LIGASE_II"/>
    <property type="match status" value="1"/>
</dbReference>
<sequence length="460" mass="52047">MRIKEILNTAAINSTITAEGWVKTKRELKGFSFIEISDGSTMNGLQVIIDGNLADYEAIIKKLNTGAAVTATGLVVESPGKGQRIELQAKAVTVHGEADPETYPLQKKRHSFEFLRTIGHLRGKTNTMGAVMRVRNACATAIHQFFQERGFIWAHTPIITASDCEGAGEMFAVTNFDLANPKRTKEGAVDYAEDFFGRPAYLTVSGQLEAEVMAMAFKDVYTFGPTFRAENSNTSRHLAEFWMVEPEMAFCDIVGDQDLAEEFLRYIFKYVLEACPEDMEFFNKRIDNSVLATAQNIIENEFARITYTEAIALLEKSNKTFEFPVEWGIDLQSEHERYLAEDLFKKPLIVSNYPKDIKAFYMRLNDDQKTVAAMDVLAPKIGEIIGGSQREERLDVLERRIQEMNIEAADLWWYLDLRRFGTVPHAGFGLGFERLVQFMTGMGNIRDVIPFPRTPLNAEF</sequence>